<evidence type="ECO:0000250" key="1"/>
<evidence type="ECO:0000250" key="2">
    <source>
        <dbReference type="UniProtKB" id="P33991"/>
    </source>
</evidence>
<evidence type="ECO:0000250" key="3">
    <source>
        <dbReference type="UniProtKB" id="P49717"/>
    </source>
</evidence>
<evidence type="ECO:0000255" key="4"/>
<evidence type="ECO:0000256" key="5">
    <source>
        <dbReference type="SAM" id="MobiDB-lite"/>
    </source>
</evidence>
<evidence type="ECO:0000269" key="6">
    <source>
    </source>
</evidence>
<evidence type="ECO:0000269" key="7">
    <source>
    </source>
</evidence>
<evidence type="ECO:0000269" key="8">
    <source>
    </source>
</evidence>
<evidence type="ECO:0000269" key="9">
    <source>
    </source>
</evidence>
<evidence type="ECO:0000269" key="10">
    <source>
    </source>
</evidence>
<evidence type="ECO:0000305" key="11"/>
<evidence type="ECO:0000312" key="12">
    <source>
        <dbReference type="EMBL" id="AAC60225.1"/>
    </source>
</evidence>
<evidence type="ECO:0000312" key="13">
    <source>
        <dbReference type="EMBL" id="AAH83031.1"/>
    </source>
</evidence>
<protein>
    <recommendedName>
        <fullName>DNA replication licensing factor mcm4-A</fullName>
        <ecNumber evidence="3">3.6.4.12</ecNumber>
    </recommendedName>
    <alternativeName>
        <fullName>CDC21 homolog-A</fullName>
    </alternativeName>
    <alternativeName>
        <fullName>Minichromosome maintenance protein 4-A</fullName>
        <shortName>xMCM4-A</shortName>
    </alternativeName>
    <alternativeName>
        <fullName>P1-CDC21-A</fullName>
    </alternativeName>
    <alternativeName>
        <fullName>p98</fullName>
    </alternativeName>
</protein>
<dbReference type="EC" id="3.6.4.12" evidence="3"/>
<dbReference type="EMBL" id="U44049">
    <property type="protein sequence ID" value="AAC60225.1"/>
    <property type="status" value="ALT_FRAME"/>
    <property type="molecule type" value="mRNA"/>
</dbReference>
<dbReference type="EMBL" id="BC083031">
    <property type="protein sequence ID" value="AAH83031.1"/>
    <property type="molecule type" value="mRNA"/>
</dbReference>
<dbReference type="PIR" id="T47223">
    <property type="entry name" value="T47223"/>
</dbReference>
<dbReference type="RefSeq" id="NP_001079069.1">
    <property type="nucleotide sequence ID" value="NM_001085600.2"/>
</dbReference>
<dbReference type="SMR" id="Q5XK83"/>
<dbReference type="BioGRID" id="96822">
    <property type="interactions" value="4"/>
</dbReference>
<dbReference type="IntAct" id="Q5XK83">
    <property type="interactions" value="3"/>
</dbReference>
<dbReference type="MINT" id="Q5XK83"/>
<dbReference type="GeneID" id="373601"/>
<dbReference type="KEGG" id="xla:373601"/>
<dbReference type="AGR" id="Xenbase:XB-GENE-6252896"/>
<dbReference type="CTD" id="373601"/>
<dbReference type="Xenbase" id="XB-GENE-6252896">
    <property type="gene designation" value="mcm4.S"/>
</dbReference>
<dbReference type="OrthoDB" id="10251574at2759"/>
<dbReference type="Proteomes" id="UP000186698">
    <property type="component" value="Chromosome 6S"/>
</dbReference>
<dbReference type="Bgee" id="373601">
    <property type="expression patterns" value="Expressed in testis and 19 other cell types or tissues"/>
</dbReference>
<dbReference type="GO" id="GO:0000785">
    <property type="term" value="C:chromatin"/>
    <property type="evidence" value="ECO:0000314"/>
    <property type="project" value="UniProtKB"/>
</dbReference>
<dbReference type="GO" id="GO:0071162">
    <property type="term" value="C:CMG complex"/>
    <property type="evidence" value="ECO:0000314"/>
    <property type="project" value="UniProtKB"/>
</dbReference>
<dbReference type="GO" id="GO:0042555">
    <property type="term" value="C:MCM complex"/>
    <property type="evidence" value="ECO:0000314"/>
    <property type="project" value="UniProtKB"/>
</dbReference>
<dbReference type="GO" id="GO:0005634">
    <property type="term" value="C:nucleus"/>
    <property type="evidence" value="ECO:0000318"/>
    <property type="project" value="GO_Central"/>
</dbReference>
<dbReference type="GO" id="GO:0005524">
    <property type="term" value="F:ATP binding"/>
    <property type="evidence" value="ECO:0007669"/>
    <property type="project" value="UniProtKB-KW"/>
</dbReference>
<dbReference type="GO" id="GO:0016887">
    <property type="term" value="F:ATP hydrolysis activity"/>
    <property type="evidence" value="ECO:0007669"/>
    <property type="project" value="RHEA"/>
</dbReference>
<dbReference type="GO" id="GO:0003682">
    <property type="term" value="F:chromatin binding"/>
    <property type="evidence" value="ECO:0000314"/>
    <property type="project" value="CAFA"/>
</dbReference>
<dbReference type="GO" id="GO:0003697">
    <property type="term" value="F:single-stranded DNA binding"/>
    <property type="evidence" value="ECO:0000318"/>
    <property type="project" value="GO_Central"/>
</dbReference>
<dbReference type="GO" id="GO:0017116">
    <property type="term" value="F:single-stranded DNA helicase activity"/>
    <property type="evidence" value="ECO:0007669"/>
    <property type="project" value="TreeGrafter"/>
</dbReference>
<dbReference type="GO" id="GO:0008270">
    <property type="term" value="F:zinc ion binding"/>
    <property type="evidence" value="ECO:0007669"/>
    <property type="project" value="UniProtKB-KW"/>
</dbReference>
<dbReference type="GO" id="GO:0044786">
    <property type="term" value="P:cell cycle DNA replication"/>
    <property type="evidence" value="ECO:0000250"/>
    <property type="project" value="UniProtKB"/>
</dbReference>
<dbReference type="GO" id="GO:0006260">
    <property type="term" value="P:DNA replication"/>
    <property type="evidence" value="ECO:0000318"/>
    <property type="project" value="GO_Central"/>
</dbReference>
<dbReference type="GO" id="GO:0006271">
    <property type="term" value="P:DNA strand elongation involved in DNA replication"/>
    <property type="evidence" value="ECO:0000318"/>
    <property type="project" value="GO_Central"/>
</dbReference>
<dbReference type="GO" id="GO:0000727">
    <property type="term" value="P:double-strand break repair via break-induced replication"/>
    <property type="evidence" value="ECO:0000318"/>
    <property type="project" value="GO_Central"/>
</dbReference>
<dbReference type="GO" id="GO:1902975">
    <property type="term" value="P:mitotic DNA replication initiation"/>
    <property type="evidence" value="ECO:0000318"/>
    <property type="project" value="GO_Central"/>
</dbReference>
<dbReference type="GO" id="GO:0030174">
    <property type="term" value="P:regulation of DNA-templated DNA replication initiation"/>
    <property type="evidence" value="ECO:0000314"/>
    <property type="project" value="UniProtKB"/>
</dbReference>
<dbReference type="CDD" id="cd17755">
    <property type="entry name" value="MCM4"/>
    <property type="match status" value="1"/>
</dbReference>
<dbReference type="FunFam" id="2.20.28.10:FF:000003">
    <property type="entry name" value="DNA helicase"/>
    <property type="match status" value="1"/>
</dbReference>
<dbReference type="FunFam" id="3.30.1640.10:FF:000001">
    <property type="entry name" value="DNA helicase"/>
    <property type="match status" value="1"/>
</dbReference>
<dbReference type="FunFam" id="3.40.50.300:FF:000217">
    <property type="entry name" value="DNA helicase"/>
    <property type="match status" value="1"/>
</dbReference>
<dbReference type="Gene3D" id="2.20.28.10">
    <property type="match status" value="1"/>
</dbReference>
<dbReference type="Gene3D" id="3.30.1640.10">
    <property type="entry name" value="mini-chromosome maintenance (MCM) complex, chain A, domain 1"/>
    <property type="match status" value="1"/>
</dbReference>
<dbReference type="Gene3D" id="2.40.50.140">
    <property type="entry name" value="Nucleic acid-binding proteins"/>
    <property type="match status" value="1"/>
</dbReference>
<dbReference type="Gene3D" id="3.40.50.300">
    <property type="entry name" value="P-loop containing nucleotide triphosphate hydrolases"/>
    <property type="match status" value="1"/>
</dbReference>
<dbReference type="InterPro" id="IPR031327">
    <property type="entry name" value="MCM"/>
</dbReference>
<dbReference type="InterPro" id="IPR008047">
    <property type="entry name" value="MCM_4"/>
</dbReference>
<dbReference type="InterPro" id="IPR018525">
    <property type="entry name" value="MCM_CS"/>
</dbReference>
<dbReference type="InterPro" id="IPR001208">
    <property type="entry name" value="MCM_dom"/>
</dbReference>
<dbReference type="InterPro" id="IPR041562">
    <property type="entry name" value="MCM_lid"/>
</dbReference>
<dbReference type="InterPro" id="IPR027925">
    <property type="entry name" value="MCM_N"/>
</dbReference>
<dbReference type="InterPro" id="IPR033762">
    <property type="entry name" value="MCM_OB"/>
</dbReference>
<dbReference type="InterPro" id="IPR012340">
    <property type="entry name" value="NA-bd_OB-fold"/>
</dbReference>
<dbReference type="InterPro" id="IPR027417">
    <property type="entry name" value="P-loop_NTPase"/>
</dbReference>
<dbReference type="PANTHER" id="PTHR11630">
    <property type="entry name" value="DNA REPLICATION LICENSING FACTOR MCM FAMILY MEMBER"/>
    <property type="match status" value="1"/>
</dbReference>
<dbReference type="PANTHER" id="PTHR11630:SF66">
    <property type="entry name" value="DNA REPLICATION LICENSING FACTOR MCM4"/>
    <property type="match status" value="1"/>
</dbReference>
<dbReference type="Pfam" id="PF00493">
    <property type="entry name" value="MCM"/>
    <property type="match status" value="1"/>
</dbReference>
<dbReference type="Pfam" id="PF21128">
    <property type="entry name" value="MCM4_WHD"/>
    <property type="match status" value="1"/>
</dbReference>
<dbReference type="Pfam" id="PF17855">
    <property type="entry name" value="MCM_lid"/>
    <property type="match status" value="1"/>
</dbReference>
<dbReference type="Pfam" id="PF14551">
    <property type="entry name" value="MCM_N"/>
    <property type="match status" value="1"/>
</dbReference>
<dbReference type="Pfam" id="PF17207">
    <property type="entry name" value="MCM_OB"/>
    <property type="match status" value="1"/>
</dbReference>
<dbReference type="PRINTS" id="PR01657">
    <property type="entry name" value="MCMFAMILY"/>
</dbReference>
<dbReference type="PRINTS" id="PR01660">
    <property type="entry name" value="MCMPROTEIN4"/>
</dbReference>
<dbReference type="SMART" id="SM00350">
    <property type="entry name" value="MCM"/>
    <property type="match status" value="1"/>
</dbReference>
<dbReference type="SUPFAM" id="SSF50249">
    <property type="entry name" value="Nucleic acid-binding proteins"/>
    <property type="match status" value="1"/>
</dbReference>
<dbReference type="SUPFAM" id="SSF52540">
    <property type="entry name" value="P-loop containing nucleoside triphosphate hydrolases"/>
    <property type="match status" value="1"/>
</dbReference>
<dbReference type="PROSITE" id="PS00847">
    <property type="entry name" value="MCM_1"/>
    <property type="match status" value="1"/>
</dbReference>
<dbReference type="PROSITE" id="PS50051">
    <property type="entry name" value="MCM_2"/>
    <property type="match status" value="1"/>
</dbReference>
<comment type="function">
    <text evidence="9 10">Acts as a component of the MCM2-7 complex (MCM complex) which is the replicative helicase essential for 'once per cell cycle' DNA replication initiation and elongation in eukaryotic cells. Core component of CDC45-MCM-GINS (CMG) helicase, the molecular machine that unwinds template DNA during replication, and around which the replisome is built. The active ATPase sites in the MCM2-7 ring are formed through the interaction surfaces of two neighboring subunits such that a critical structure of a conserved arginine finger motif is provided in trans relative to the ATP-binding site of the Walker A box of the adjacent subunit. The six ATPase active sites, however, are likely to contribute differentially to the complex helicase activity.</text>
</comment>
<comment type="catalytic activity">
    <reaction evidence="3">
        <text>ATP + H2O = ADP + phosphate + H(+)</text>
        <dbReference type="Rhea" id="RHEA:13065"/>
        <dbReference type="ChEBI" id="CHEBI:15377"/>
        <dbReference type="ChEBI" id="CHEBI:15378"/>
        <dbReference type="ChEBI" id="CHEBI:30616"/>
        <dbReference type="ChEBI" id="CHEBI:43474"/>
        <dbReference type="ChEBI" id="CHEBI:456216"/>
        <dbReference type="EC" id="3.6.4.12"/>
    </reaction>
    <physiologicalReaction direction="left-to-right" evidence="3">
        <dbReference type="Rhea" id="RHEA:13066"/>
    </physiologicalReaction>
</comment>
<comment type="subunit">
    <text evidence="7 8 9 10">Component of the mcm2-7 complex (RLF-M) (PubMed:9214646, PubMed:9214647). The complex forms a toroidal hexameric ring with the proposed subunit order mcm2-mcm6-mcm4-mcm7-mcm3-mcm5 (PubMed:9214646, PubMed:9214647). The heterodimer of mmcm3/mcm5 interacts with mcm4, mmcm6, mcm7 and weakly with mcm2 (PubMed:9214646, PubMed:9214647). Component of the CMG helicase complex, composed of the mcm2-7 complex, the GINS complex and cdc45 (PubMed:30842657, PubMed:30979826).</text>
</comment>
<comment type="subcellular location">
    <subcellularLocation>
        <location evidence="9 10">Nucleus</location>
    </subcellularLocation>
    <subcellularLocation>
        <location evidence="9 10">Chromosome</location>
    </subcellularLocation>
    <text evidence="9 10">Associated with chromatin before the formation of nuclei and detaches from it as DNA replication progresses.</text>
</comment>
<comment type="PTM">
    <text evidence="1 6">Hyperphosphorylated during mitosis in a mechanism requiring cdc2-cyclin B and other kinases. Undergoes dephosphorylation after exiting mitosis, existing in a partially phosphorylated state in the cytosolic interphase mcm complex which associates with the pre-replication complexes (pre-Rcs). Complete dephosphorylation inactivates the mcm complex, preventing its binding to chromatin. Becomes actively phosphorylated during S phase once the mcm complex is assembled on the chromatin. This chromatin-associated phosphorylation occurs during the activation of the pre-Rcs and is independent of cdks (By similarity). Phosphorylated by the cdc7-dbf4b complex.</text>
</comment>
<comment type="miscellaneous">
    <text evidence="3">Early fractionation of eukaryotic MCM proteins yielded a variety of dimeric, trimeric and tetrameric complexes with unclear biological significance. Specifically a MCM467 subcomplex is shown to have in vitro helicase activity which is inhibited by the MCM2 subunit. The MCM2-7 hexamer is the proposed physiological active complex.</text>
</comment>
<comment type="similarity">
    <text evidence="4">Belongs to the MCM family.</text>
</comment>
<comment type="sequence caution" evidence="11">
    <conflict type="frameshift">
        <sequence resource="EMBL-CDS" id="AAC60225"/>
    </conflict>
</comment>
<proteinExistence type="evidence at protein level"/>
<feature type="chain" id="PRO_0000240594" description="DNA replication licensing factor mcm4-A">
    <location>
        <begin position="1"/>
        <end position="858"/>
    </location>
</feature>
<feature type="domain" description="MCM" evidence="4">
    <location>
        <begin position="453"/>
        <end position="662"/>
    </location>
</feature>
<feature type="zinc finger region" description="C4-type" evidence="4">
    <location>
        <begin position="301"/>
        <end position="326"/>
    </location>
</feature>
<feature type="region of interest" description="Disordered" evidence="5">
    <location>
        <begin position="1"/>
        <end position="125"/>
    </location>
</feature>
<feature type="short sequence motif" description="Arginine finger">
    <location>
        <begin position="637"/>
        <end position="640"/>
    </location>
</feature>
<feature type="compositionally biased region" description="Polar residues" evidence="5">
    <location>
        <begin position="54"/>
        <end position="68"/>
    </location>
</feature>
<feature type="compositionally biased region" description="Polar residues" evidence="5">
    <location>
        <begin position="79"/>
        <end position="94"/>
    </location>
</feature>
<feature type="binding site" evidence="2">
    <location>
        <position position="466"/>
    </location>
    <ligand>
        <name>ATP</name>
        <dbReference type="ChEBI" id="CHEBI:30616"/>
        <label>2</label>
        <note>ligand shared with MCM7</note>
    </ligand>
</feature>
<feature type="binding site" evidence="2">
    <location>
        <position position="492"/>
    </location>
    <ligand>
        <name>ATP</name>
        <dbReference type="ChEBI" id="CHEBI:30616"/>
        <label>1</label>
        <note>ligand shared with MCM6</note>
    </ligand>
</feature>
<feature type="binding site" evidence="2">
    <location>
        <position position="511"/>
    </location>
    <ligand>
        <name>ATP</name>
        <dbReference type="ChEBI" id="CHEBI:30616"/>
        <label>2</label>
        <note>ligand shared with MCM7</note>
    </ligand>
</feature>
<feature type="binding site" evidence="2">
    <location>
        <position position="512"/>
    </location>
    <ligand>
        <name>ATP</name>
        <dbReference type="ChEBI" id="CHEBI:30616"/>
        <label>2</label>
        <note>ligand shared with MCM7</note>
    </ligand>
</feature>
<feature type="binding site" evidence="2">
    <location>
        <position position="613"/>
    </location>
    <ligand>
        <name>ATP</name>
        <dbReference type="ChEBI" id="CHEBI:30616"/>
        <label>2</label>
        <note>ligand shared with MCM7</note>
    </ligand>
</feature>
<feature type="binding site" evidence="2">
    <location>
        <position position="638"/>
    </location>
    <ligand>
        <name>ATP</name>
        <dbReference type="ChEBI" id="CHEBI:30616"/>
        <label>1</label>
        <note>ligand shared with MCM6</note>
    </ligand>
</feature>
<feature type="binding site" evidence="2">
    <location>
        <position position="727"/>
    </location>
    <ligand>
        <name>ATP</name>
        <dbReference type="ChEBI" id="CHEBI:30616"/>
        <label>1</label>
        <note>ligand shared with MCM6</note>
    </ligand>
</feature>
<feature type="binding site" evidence="2">
    <location>
        <position position="730"/>
    </location>
    <ligand>
        <name>ATP</name>
        <dbReference type="ChEBI" id="CHEBI:30616"/>
        <label>1</label>
        <note>ligand shared with MCM6</note>
    </ligand>
</feature>
<feature type="sequence conflict" description="In Ref. 1; AAC60225." evidence="11" ref="1">
    <original>E</original>
    <variation>G</variation>
    <location>
        <position position="354"/>
    </location>
</feature>
<feature type="sequence conflict" description="In Ref. 1; AAC60225." evidence="11" ref="1">
    <original>A</original>
    <variation>V</variation>
    <location>
        <position position="663"/>
    </location>
</feature>
<reference evidence="11 12" key="1">
    <citation type="journal article" date="1997" name="EMBO J.">
        <title>Licensing of DNA replication by a multi-protein complex of MCM/P1 proteins in Xenopus eggs.</title>
        <authorList>
            <person name="Kubota Y."/>
            <person name="Mimura S."/>
            <person name="Nishimoto S."/>
            <person name="Masuda T."/>
            <person name="Nojima H."/>
            <person name="Takisawa H."/>
        </authorList>
    </citation>
    <scope>NUCLEOTIDE SEQUENCE [MRNA]</scope>
    <scope>FUNCTION</scope>
    <scope>IDENTIFICATION IN A COMPLEX WITH MCM2; MMCM3; MCM5; MMCM6 AND MCM7</scope>
    <scope>SUBCELLULAR LOCATION</scope>
    <source>
        <tissue evidence="10">Oocyte</tissue>
    </source>
</reference>
<reference evidence="13" key="2">
    <citation type="submission" date="2004-09" db="EMBL/GenBank/DDBJ databases">
        <authorList>
            <consortium name="NIH - Xenopus Gene Collection (XGC) project"/>
        </authorList>
    </citation>
    <scope>NUCLEOTIDE SEQUENCE [LARGE SCALE MRNA]</scope>
    <source>
        <tissue evidence="13">Embryo</tissue>
    </source>
</reference>
<reference evidence="11" key="3">
    <citation type="journal article" date="1997" name="EMBO J.">
        <title>The RLF-M component of the replication licensing system forms complexes containing all six MCM/P1 polypeptides.</title>
        <authorList>
            <person name="Thommes P."/>
            <person name="Kubota Y."/>
            <person name="Takisawa H."/>
            <person name="Blow J.J."/>
        </authorList>
    </citation>
    <scope>FUNCTION</scope>
    <scope>IDENTIFICATION IN RLF-M COMPLEX</scope>
    <scope>SUBCELLULAR LOCATION</scope>
</reference>
<reference key="4">
    <citation type="journal article" date="2005" name="Genes Dev.">
        <title>Cdc7-Drf1 is a developmentally regulated protein kinase required for the initiation of vertebrate DNA replication.</title>
        <authorList>
            <person name="Takahashi T.S."/>
            <person name="Walter J.C."/>
        </authorList>
    </citation>
    <scope>PHOSPHORYLATION</scope>
</reference>
<reference key="5">
    <citation type="journal article" date="2019" name="Life. Sci Alliance">
        <title>Mitotic replisome disassembly depends on TRAIP ubiquitin ligase activity.</title>
        <authorList>
            <person name="Priego Moreno S."/>
            <person name="Jones R.M."/>
            <person name="Poovathumkadavil D."/>
            <person name="Scaramuzza S."/>
            <person name="Gambus A."/>
        </authorList>
    </citation>
    <scope>IDENTIFICATION IN THE CMG HELICASE COMPLEX</scope>
</reference>
<reference key="6">
    <citation type="journal article" date="2019" name="Nature">
        <title>TRAIP is a master regulator of DNA interstrand crosslink repair.</title>
        <authorList>
            <person name="Wu R.A."/>
            <person name="Semlow D.R."/>
            <person name="Kamimae-Lanning A.N."/>
            <person name="Kochenova O.V."/>
            <person name="Chistol G."/>
            <person name="Hodskinson M.R."/>
            <person name="Amunugama R."/>
            <person name="Sparks J.L."/>
            <person name="Wang M."/>
            <person name="Deng L."/>
            <person name="Mimoso C.A."/>
            <person name="Low E."/>
            <person name="Patel K.J."/>
            <person name="Walter J.C."/>
        </authorList>
    </citation>
    <scope>IDENTIFICATION IN THE CMG HELICASE COMPLEX</scope>
</reference>
<accession>Q5XK83</accession>
<accession>O42589</accession>
<keyword id="KW-0067">ATP-binding</keyword>
<keyword id="KW-0131">Cell cycle</keyword>
<keyword id="KW-0158">Chromosome</keyword>
<keyword id="KW-0235">DNA replication</keyword>
<keyword id="KW-0238">DNA-binding</keyword>
<keyword id="KW-0347">Helicase</keyword>
<keyword id="KW-0378">Hydrolase</keyword>
<keyword id="KW-0479">Metal-binding</keyword>
<keyword id="KW-0547">Nucleotide-binding</keyword>
<keyword id="KW-0539">Nucleus</keyword>
<keyword id="KW-1185">Reference proteome</keyword>
<keyword id="KW-0862">Zinc</keyword>
<keyword id="KW-0863">Zinc-finger</keyword>
<gene>
    <name type="primary">mcm4-a</name>
</gene>
<sequence length="858" mass="96635">MSSPTSTPSRRKSKRGRGSNPPTPRGEEVQSPPSQKRRTEDSTSIGELLPMPTSPSGDIQSPLFSSPAPSRHSAHQSELDLSSPLTYGTPSSRVEGTPRSGIRGTPARQRADLGSARKVKQVDLHSDQPAAEELVTSEQSLGQKLVIWGTDVNVAICKEKFQRFVQRFIDPLAKEEENVGLDLNEPIYMQRLEEINVVGEPFLNIDCDHLRSFDQDLYRQLVCYPQEVIPTFDMAANEIFFERYPDSILEHQIQVRPYNALKTRNMRSLNPEDIDQLITISGMVIRTSQIIPEMQESFFKCQVCAFTTRVEIDRGRIAEPSVCKHCNTTHSMALIHNRSMFSDKQMIKLQESPEDMPAGQTPHTTILYAHNDLVDKVQPGDRVNVTGIYRAVPIRVNPRVRNVKSVYKTHIDVIHYRKTDSKRLHGIDEDTEQKMFTEERVAVLKELAAKPDIYERLAAALAPSIYEHEDIKKGILLQLFGGTRKDFSHTGRGKFRAEVNILLCGDPGTSKSQLLQYVYNLVPRGQYTSGKGSSAVGLTAYVMKDPETRQLVLQTGALVLSDNGICCIDEFDKMNESTRSVLHEVMEQQTLSIAKAGIICQLNARTSVLAAANPVESQWNPKKTTIENIQLPHTLLSRFDLIFLMLDPQDETYDRRLAHHLVALYYQSEEQLKEEHLDMAVLKDYIAYARTYVNPRLGEEASQALIEAYVDMRKIGSGRGMVSAYPRQLESLIRLSEAHAKVRFSSKVETIDVEEAKRLHREALKQSATDPRTGIVDISILTTGMSATARKRKEELAQVLKKLIQSKGKTPAFKYQQLFEDLRGQSDAAITKDMFDEALHALADEDYLTVTGKTVRLL</sequence>
<name>MCM4A_XENLA</name>
<organism>
    <name type="scientific">Xenopus laevis</name>
    <name type="common">African clawed frog</name>
    <dbReference type="NCBI Taxonomy" id="8355"/>
    <lineage>
        <taxon>Eukaryota</taxon>
        <taxon>Metazoa</taxon>
        <taxon>Chordata</taxon>
        <taxon>Craniata</taxon>
        <taxon>Vertebrata</taxon>
        <taxon>Euteleostomi</taxon>
        <taxon>Amphibia</taxon>
        <taxon>Batrachia</taxon>
        <taxon>Anura</taxon>
        <taxon>Pipoidea</taxon>
        <taxon>Pipidae</taxon>
        <taxon>Xenopodinae</taxon>
        <taxon>Xenopus</taxon>
        <taxon>Xenopus</taxon>
    </lineage>
</organism>